<feature type="chain" id="PRO_0000067108" description="Putative ankyrin repeat protein FPV026">
    <location>
        <begin position="1"/>
        <end position="436"/>
    </location>
</feature>
<feature type="repeat" description="ANK 1">
    <location>
        <begin position="63"/>
        <end position="92"/>
    </location>
</feature>
<feature type="repeat" description="ANK 2">
    <location>
        <begin position="101"/>
        <end position="130"/>
    </location>
</feature>
<feature type="repeat" description="ANK 3">
    <location>
        <begin position="135"/>
        <end position="164"/>
    </location>
</feature>
<feature type="repeat" description="ANK 4">
    <location>
        <begin position="168"/>
        <end position="197"/>
    </location>
</feature>
<feature type="repeat" description="ANK 5">
    <location>
        <begin position="201"/>
        <end position="230"/>
    </location>
</feature>
<feature type="repeat" description="ANK 6">
    <location>
        <begin position="234"/>
        <end position="266"/>
    </location>
</feature>
<feature type="domain" description="F-box" evidence="1">
    <location>
        <begin position="409"/>
        <end position="436"/>
    </location>
</feature>
<protein>
    <recommendedName>
        <fullName>Putative ankyrin repeat protein FPV026</fullName>
    </recommendedName>
</protein>
<accession>Q9J5H5</accession>
<name>V026_FOWPN</name>
<organism>
    <name type="scientific">Fowlpox virus (strain NVSL)</name>
    <name type="common">FPV</name>
    <dbReference type="NCBI Taxonomy" id="928301"/>
    <lineage>
        <taxon>Viruses</taxon>
        <taxon>Varidnaviria</taxon>
        <taxon>Bamfordvirae</taxon>
        <taxon>Nucleocytoviricota</taxon>
        <taxon>Pokkesviricetes</taxon>
        <taxon>Chitovirales</taxon>
        <taxon>Poxviridae</taxon>
        <taxon>Chordopoxvirinae</taxon>
        <taxon>Avipoxvirus</taxon>
        <taxon>Fowlpox virus</taxon>
    </lineage>
</organism>
<keyword id="KW-0040">ANK repeat</keyword>
<keyword id="KW-1185">Reference proteome</keyword>
<keyword id="KW-0677">Repeat</keyword>
<dbReference type="EMBL" id="AF198100">
    <property type="protein sequence ID" value="AAF44370.1"/>
    <property type="molecule type" value="Genomic_DNA"/>
</dbReference>
<dbReference type="RefSeq" id="NP_038989.1">
    <property type="nucleotide sequence ID" value="NC_002188.1"/>
</dbReference>
<dbReference type="SMR" id="Q9J5H5"/>
<dbReference type="GeneID" id="1486745"/>
<dbReference type="KEGG" id="vg:1486745"/>
<dbReference type="Proteomes" id="UP000008597">
    <property type="component" value="Segment"/>
</dbReference>
<dbReference type="Gene3D" id="1.25.40.20">
    <property type="entry name" value="Ankyrin repeat-containing domain"/>
    <property type="match status" value="1"/>
</dbReference>
<dbReference type="InterPro" id="IPR002110">
    <property type="entry name" value="Ankyrin_rpt"/>
</dbReference>
<dbReference type="InterPro" id="IPR036770">
    <property type="entry name" value="Ankyrin_rpt-contain_sf"/>
</dbReference>
<dbReference type="InterPro" id="IPR001810">
    <property type="entry name" value="F-box_dom"/>
</dbReference>
<dbReference type="InterPro" id="IPR018272">
    <property type="entry name" value="PRANC_domain"/>
</dbReference>
<dbReference type="PANTHER" id="PTHR24198">
    <property type="entry name" value="ANKYRIN REPEAT AND PROTEIN KINASE DOMAIN-CONTAINING PROTEIN"/>
    <property type="match status" value="1"/>
</dbReference>
<dbReference type="PANTHER" id="PTHR24198:SF165">
    <property type="entry name" value="ANKYRIN REPEAT-CONTAINING PROTEIN-RELATED"/>
    <property type="match status" value="1"/>
</dbReference>
<dbReference type="Pfam" id="PF12796">
    <property type="entry name" value="Ank_2"/>
    <property type="match status" value="2"/>
</dbReference>
<dbReference type="Pfam" id="PF09372">
    <property type="entry name" value="PRANC"/>
    <property type="match status" value="1"/>
</dbReference>
<dbReference type="SMART" id="SM00248">
    <property type="entry name" value="ANK"/>
    <property type="match status" value="6"/>
</dbReference>
<dbReference type="SUPFAM" id="SSF48403">
    <property type="entry name" value="Ankyrin repeat"/>
    <property type="match status" value="1"/>
</dbReference>
<dbReference type="PROSITE" id="PS50297">
    <property type="entry name" value="ANK_REP_REGION"/>
    <property type="match status" value="1"/>
</dbReference>
<dbReference type="PROSITE" id="PS50088">
    <property type="entry name" value="ANK_REPEAT"/>
    <property type="match status" value="5"/>
</dbReference>
<dbReference type="PROSITE" id="PS50181">
    <property type="entry name" value="FBOX"/>
    <property type="match status" value="1"/>
</dbReference>
<organismHost>
    <name type="scientific">Vertebrata</name>
    <dbReference type="NCBI Taxonomy" id="7742"/>
</organismHost>
<reference key="1">
    <citation type="journal article" date="2000" name="J. Virol.">
        <title>The genome of fowlpox virus.</title>
        <authorList>
            <person name="Afonso C.L."/>
            <person name="Tulman E.R."/>
            <person name="Lu Z."/>
            <person name="Zsak L."/>
            <person name="Kutish G.F."/>
            <person name="Rock D.L."/>
        </authorList>
    </citation>
    <scope>NUCLEOTIDE SEQUENCE [LARGE SCALE GENOMIC DNA]</scope>
</reference>
<evidence type="ECO:0000255" key="1">
    <source>
        <dbReference type="PROSITE-ProRule" id="PRU00080"/>
    </source>
</evidence>
<gene>
    <name type="ordered locus">FPV026</name>
</gene>
<sequence length="436" mass="50514">MWLFPERVYYLKNENLLISFYIECYLTITTMFLDDDTPHEESTVQPYSINLVRRLMEGNTKDEGIRVLRMAIKFERIDIIKILLEYGVNVNENEYYEEELTCYSVLHFAVDIGNKDIVSILLYAGADVNNTRCYLRNTPLHLAIQQKNTDIAKLLLDSGADQNITNENGNIPIQIAVTYNDEKMVNILLQYSPNLEIADYNGRTVLHNAVLDKNINIVSLLLENGALVDSKCIEGYTILLSSVNRTDPFIIKMLLHRGANPFFLNIKLNHIPLTWYCYCHGNSLSMTVKDLISSAVMISHIRDKVKLTPGFKINEDFTNSIYRFNYYKNLCEEEIRNMKIRRAGYKLTVFDFIKAGKQDDHNTLARCIELLLVGVNKNEFQIYGDIIDQYIKIGLYRKEQLDRVVNSLTSTITNLPYEVIYIIVEKMTNKELCEIR</sequence>
<proteinExistence type="predicted"/>